<protein>
    <recommendedName>
        <fullName evidence="5">Venom metalloproteinase BumaMPs1</fullName>
        <shortName evidence="7">MPs1</shortName>
        <ecNumber evidence="6">3.4.24.-</ecNumber>
    </recommendedName>
    <alternativeName>
        <fullName evidence="8">Acid trehalase</fullName>
    </alternativeName>
</protein>
<keyword id="KW-1015">Disulfide bond</keyword>
<keyword id="KW-0325">Glycoprotein</keyword>
<keyword id="KW-0378">Hydrolase</keyword>
<keyword id="KW-0479">Metal-binding</keyword>
<keyword id="KW-0482">Metalloprotease</keyword>
<keyword id="KW-0645">Protease</keyword>
<keyword id="KW-0964">Secreted</keyword>
<keyword id="KW-0732">Signal</keyword>
<keyword id="KW-0800">Toxin</keyword>
<keyword id="KW-0862">Zinc</keyword>
<comment type="function">
    <text evidence="6">Metalloprotease.</text>
</comment>
<comment type="cofactor">
    <cofactor evidence="3">
        <name>Zn(2+)</name>
        <dbReference type="ChEBI" id="CHEBI:29105"/>
    </cofactor>
    <text evidence="1">Binds 1 zinc ion per subunit.</text>
</comment>
<comment type="subcellular location">
    <subcellularLocation>
        <location evidence="7">Secreted</location>
    </subcellularLocation>
</comment>
<comment type="tissue specificity">
    <text evidence="7">Expressed by the venom gland.</text>
</comment>
<comment type="PTM">
    <text evidence="6">Contains several disulfide bonds.</text>
</comment>
<comment type="similarity">
    <text evidence="6">Belongs to the venom metalloproteinase (M12B) family.</text>
</comment>
<proteinExistence type="evidence at transcript level"/>
<evidence type="ECO:0000250" key="1"/>
<evidence type="ECO:0000255" key="2"/>
<evidence type="ECO:0000255" key="3">
    <source>
        <dbReference type="PROSITE-ProRule" id="PRU00276"/>
    </source>
</evidence>
<evidence type="ECO:0000255" key="4">
    <source>
        <dbReference type="PROSITE-ProRule" id="PRU00498"/>
    </source>
</evidence>
<evidence type="ECO:0000303" key="5">
    <source>
    </source>
</evidence>
<evidence type="ECO:0000305" key="6"/>
<evidence type="ECO:0000305" key="7">
    <source>
    </source>
</evidence>
<evidence type="ECO:0000312" key="8">
    <source>
        <dbReference type="EMBL" id="AHA36326.1"/>
    </source>
</evidence>
<dbReference type="EC" id="3.4.24.-" evidence="6"/>
<dbReference type="EMBL" id="KF492696">
    <property type="protein sequence ID" value="AHA36326.1"/>
    <property type="molecule type" value="mRNA"/>
</dbReference>
<dbReference type="SMR" id="U6BLN5"/>
<dbReference type="GO" id="GO:0005576">
    <property type="term" value="C:extracellular region"/>
    <property type="evidence" value="ECO:0007669"/>
    <property type="project" value="UniProtKB-SubCell"/>
</dbReference>
<dbReference type="GO" id="GO:0046872">
    <property type="term" value="F:metal ion binding"/>
    <property type="evidence" value="ECO:0007669"/>
    <property type="project" value="UniProtKB-KW"/>
</dbReference>
<dbReference type="GO" id="GO:0004222">
    <property type="term" value="F:metalloendopeptidase activity"/>
    <property type="evidence" value="ECO:0007669"/>
    <property type="project" value="InterPro"/>
</dbReference>
<dbReference type="GO" id="GO:0090729">
    <property type="term" value="F:toxin activity"/>
    <property type="evidence" value="ECO:0007669"/>
    <property type="project" value="UniProtKB-KW"/>
</dbReference>
<dbReference type="GO" id="GO:0006509">
    <property type="term" value="P:membrane protein ectodomain proteolysis"/>
    <property type="evidence" value="ECO:0007669"/>
    <property type="project" value="TreeGrafter"/>
</dbReference>
<dbReference type="Gene3D" id="3.40.390.10">
    <property type="entry name" value="Collagenase (Catalytic Domain)"/>
    <property type="match status" value="1"/>
</dbReference>
<dbReference type="InterPro" id="IPR024079">
    <property type="entry name" value="MetalloPept_cat_dom_sf"/>
</dbReference>
<dbReference type="InterPro" id="IPR001590">
    <property type="entry name" value="Peptidase_M12B"/>
</dbReference>
<dbReference type="PANTHER" id="PTHR11905">
    <property type="entry name" value="ADAM A DISINTEGRIN AND METALLOPROTEASE DOMAIN"/>
    <property type="match status" value="1"/>
</dbReference>
<dbReference type="PANTHER" id="PTHR11905:SF159">
    <property type="entry name" value="ADAM METALLOPROTEASE"/>
    <property type="match status" value="1"/>
</dbReference>
<dbReference type="Pfam" id="PF13688">
    <property type="entry name" value="Reprolysin_5"/>
    <property type="match status" value="1"/>
</dbReference>
<dbReference type="SUPFAM" id="SSF55486">
    <property type="entry name" value="Metalloproteases ('zincins'), catalytic domain"/>
    <property type="match status" value="1"/>
</dbReference>
<dbReference type="PROSITE" id="PS50215">
    <property type="entry name" value="ADAM_MEPRO"/>
    <property type="match status" value="1"/>
</dbReference>
<feature type="signal peptide" evidence="2">
    <location>
        <begin position="1"/>
        <end position="15"/>
    </location>
</feature>
<feature type="chain" id="PRO_5012407113" description="Venom metalloproteinase BumaMPs1" evidence="2">
    <location>
        <begin position="16"/>
        <end position="393"/>
    </location>
</feature>
<feature type="domain" description="Peptidase M12B" evidence="3">
    <location>
        <begin position="167"/>
        <end position="377"/>
    </location>
</feature>
<feature type="region of interest" description="Disintegrin-like domain" evidence="6">
    <location>
        <begin position="378"/>
        <end position="393"/>
    </location>
</feature>
<feature type="active site" evidence="3">
    <location>
        <position position="324"/>
    </location>
</feature>
<feature type="binding site" evidence="3">
    <location>
        <position position="323"/>
    </location>
    <ligand>
        <name>Zn(2+)</name>
        <dbReference type="ChEBI" id="CHEBI:29105"/>
        <note>catalytic</note>
    </ligand>
</feature>
<feature type="binding site" evidence="3">
    <location>
        <position position="327"/>
    </location>
    <ligand>
        <name>Zn(2+)</name>
        <dbReference type="ChEBI" id="CHEBI:29105"/>
        <note>catalytic</note>
    </ligand>
</feature>
<feature type="binding site" evidence="3">
    <location>
        <position position="333"/>
    </location>
    <ligand>
        <name>Zn(2+)</name>
        <dbReference type="ChEBI" id="CHEBI:29105"/>
        <note>catalytic</note>
    </ligand>
</feature>
<feature type="glycosylation site" description="N-linked (GlcNAc...) asparagine" evidence="4">
    <location>
        <position position="158"/>
    </location>
</feature>
<reference evidence="8" key="1">
    <citation type="journal article" date="2013" name="Toxicon">
        <title>Cloning and molecular characterization of BumaMPs1, a novel metalloproteinases from the venom of scorpion Buthus martensi Karsch.</title>
        <authorList>
            <person name="Xia X."/>
            <person name="Ma Y."/>
            <person name="Xue S."/>
            <person name="Wang A."/>
            <person name="Tao J."/>
            <person name="Zhao Y."/>
            <person name="Zhang Q."/>
            <person name="Liu R."/>
            <person name="Lu S."/>
        </authorList>
    </citation>
    <scope>NUCLEOTIDE SEQUENCE [MRNA]</scope>
    <source>
        <tissue>Telson</tissue>
    </source>
</reference>
<sequence>MFVHLLVLLFAAVEAIPTGRFEVVYPSMVTFRSGIKRIRFRALDEDIELRLEPAGDVIADDFTVINGENGEVDHSVNIQSLKRKLYKDAKVGAALHIDEDGSLIINGIVNSKLRIEPDTSKKASRNGIIAHRVIEVIEDEQLFHDVIILPPGLTRTFNYSEPLPDDKCVKIEYVFVTESSFTKSFQISSMETYLANMMNMVKIMFDSLDLGIEVAIIGIIKLTKENEAKLAPYIPLCSREMDSRETLDDMAEFYCNSADKLIQNADIVTLITTRPLGTFDENGYFFNIHLGIAFLDNICVYCYKYAIVKEDTGIYQLANTVAHESAHLLGCDHDGEKGSLDCSARDGYIMSWNNEKIGKKFSPCCKKRVEELITRRKINHCIVETCDGKRKRN</sequence>
<organism>
    <name type="scientific">Olivierus martensii</name>
    <name type="common">Manchurian scorpion</name>
    <name type="synonym">Mesobuthus martensii</name>
    <dbReference type="NCBI Taxonomy" id="34649"/>
    <lineage>
        <taxon>Eukaryota</taxon>
        <taxon>Metazoa</taxon>
        <taxon>Ecdysozoa</taxon>
        <taxon>Arthropoda</taxon>
        <taxon>Chelicerata</taxon>
        <taxon>Arachnida</taxon>
        <taxon>Scorpiones</taxon>
        <taxon>Buthida</taxon>
        <taxon>Buthoidea</taxon>
        <taxon>Buthidae</taxon>
        <taxon>Olivierus</taxon>
    </lineage>
</organism>
<accession>U6BLN5</accession>
<name>VMPA1_OLIMR</name>